<keyword id="KW-0342">GTP-binding</keyword>
<keyword id="KW-0547">Nucleotide-binding</keyword>
<keyword id="KW-1185">Reference proteome</keyword>
<keyword id="KW-0677">Repeat</keyword>
<keyword id="KW-0690">Ribosome biogenesis</keyword>
<gene>
    <name evidence="1" type="primary">der</name>
    <name type="synonym">engA</name>
    <name type="ordered locus">bbp_549</name>
</gene>
<organism>
    <name type="scientific">Buchnera aphidicola subsp. Baizongia pistaciae (strain Bp)</name>
    <dbReference type="NCBI Taxonomy" id="224915"/>
    <lineage>
        <taxon>Bacteria</taxon>
        <taxon>Pseudomonadati</taxon>
        <taxon>Pseudomonadota</taxon>
        <taxon>Gammaproteobacteria</taxon>
        <taxon>Enterobacterales</taxon>
        <taxon>Erwiniaceae</taxon>
        <taxon>Buchnera</taxon>
    </lineage>
</organism>
<dbReference type="EMBL" id="AE016826">
    <property type="protein sequence ID" value="AAO27247.1"/>
    <property type="molecule type" value="Genomic_DNA"/>
</dbReference>
<dbReference type="RefSeq" id="WP_011091648.1">
    <property type="nucleotide sequence ID" value="NC_004545.1"/>
</dbReference>
<dbReference type="SMR" id="Q89A14"/>
<dbReference type="STRING" id="224915.bbp_549"/>
<dbReference type="KEGG" id="bab:bbp_549"/>
<dbReference type="eggNOG" id="COG1160">
    <property type="taxonomic scope" value="Bacteria"/>
</dbReference>
<dbReference type="HOGENOM" id="CLU_016077_5_1_6"/>
<dbReference type="OrthoDB" id="9805918at2"/>
<dbReference type="Proteomes" id="UP000000601">
    <property type="component" value="Chromosome"/>
</dbReference>
<dbReference type="GO" id="GO:0005525">
    <property type="term" value="F:GTP binding"/>
    <property type="evidence" value="ECO:0007669"/>
    <property type="project" value="UniProtKB-UniRule"/>
</dbReference>
<dbReference type="GO" id="GO:0043022">
    <property type="term" value="F:ribosome binding"/>
    <property type="evidence" value="ECO:0007669"/>
    <property type="project" value="TreeGrafter"/>
</dbReference>
<dbReference type="GO" id="GO:0042254">
    <property type="term" value="P:ribosome biogenesis"/>
    <property type="evidence" value="ECO:0007669"/>
    <property type="project" value="UniProtKB-KW"/>
</dbReference>
<dbReference type="CDD" id="cd01894">
    <property type="entry name" value="EngA1"/>
    <property type="match status" value="1"/>
</dbReference>
<dbReference type="CDD" id="cd01895">
    <property type="entry name" value="EngA2"/>
    <property type="match status" value="1"/>
</dbReference>
<dbReference type="Gene3D" id="3.30.300.20">
    <property type="match status" value="1"/>
</dbReference>
<dbReference type="Gene3D" id="3.40.50.300">
    <property type="entry name" value="P-loop containing nucleotide triphosphate hydrolases"/>
    <property type="match status" value="2"/>
</dbReference>
<dbReference type="HAMAP" id="MF_00195">
    <property type="entry name" value="GTPase_Der"/>
    <property type="match status" value="1"/>
</dbReference>
<dbReference type="InterPro" id="IPR031166">
    <property type="entry name" value="G_ENGA"/>
</dbReference>
<dbReference type="InterPro" id="IPR006073">
    <property type="entry name" value="GTP-bd"/>
</dbReference>
<dbReference type="InterPro" id="IPR016484">
    <property type="entry name" value="GTPase_Der"/>
</dbReference>
<dbReference type="InterPro" id="IPR032859">
    <property type="entry name" value="KH_dom-like"/>
</dbReference>
<dbReference type="InterPro" id="IPR015946">
    <property type="entry name" value="KH_dom-like_a/b"/>
</dbReference>
<dbReference type="InterPro" id="IPR027417">
    <property type="entry name" value="P-loop_NTPase"/>
</dbReference>
<dbReference type="InterPro" id="IPR005225">
    <property type="entry name" value="Small_GTP-bd"/>
</dbReference>
<dbReference type="NCBIfam" id="TIGR03594">
    <property type="entry name" value="GTPase_EngA"/>
    <property type="match status" value="1"/>
</dbReference>
<dbReference type="NCBIfam" id="TIGR00231">
    <property type="entry name" value="small_GTP"/>
    <property type="match status" value="2"/>
</dbReference>
<dbReference type="PANTHER" id="PTHR43834">
    <property type="entry name" value="GTPASE DER"/>
    <property type="match status" value="1"/>
</dbReference>
<dbReference type="PANTHER" id="PTHR43834:SF6">
    <property type="entry name" value="GTPASE DER"/>
    <property type="match status" value="1"/>
</dbReference>
<dbReference type="Pfam" id="PF14714">
    <property type="entry name" value="KH_dom-like"/>
    <property type="match status" value="1"/>
</dbReference>
<dbReference type="Pfam" id="PF01926">
    <property type="entry name" value="MMR_HSR1"/>
    <property type="match status" value="2"/>
</dbReference>
<dbReference type="PIRSF" id="PIRSF006485">
    <property type="entry name" value="GTP-binding_EngA"/>
    <property type="match status" value="1"/>
</dbReference>
<dbReference type="PRINTS" id="PR00326">
    <property type="entry name" value="GTP1OBG"/>
</dbReference>
<dbReference type="SUPFAM" id="SSF52540">
    <property type="entry name" value="P-loop containing nucleoside triphosphate hydrolases"/>
    <property type="match status" value="1"/>
</dbReference>
<dbReference type="PROSITE" id="PS51712">
    <property type="entry name" value="G_ENGA"/>
    <property type="match status" value="2"/>
</dbReference>
<protein>
    <recommendedName>
        <fullName evidence="1">GTPase Der</fullName>
    </recommendedName>
    <alternativeName>
        <fullName evidence="1">GTP-binding protein EngA</fullName>
    </alternativeName>
</protein>
<proteinExistence type="inferred from homology"/>
<sequence length="462" mass="52894">MVITIALIGRTNVGKSTLFNKLTGNRNDALASNHASLTRDRKHGFIIVNNTKIVLIDTPGINEDSKKKISLDKEIFEQVKFSIKQADLVCLVVSARNKLMHKDVEIIEMLRKFQKKIFLLVNKIEGLNFDLVKYEFYTLGLRNMHFISATNGIGIDFLTNNICSFFTSQKNSLYKKNKDFDIIYSITNDKKNCCQNLNKTIKIAIIGKPNVGKSTLINVLLNEKRVIVDSNPGTTRDSNWSLIIRNKINYMFFDTAGIRKKNKISTYIEKISVHKTLKILNLVHVVLLVIDAMDGFSDQDFYLLNLIIKNGCSVIIILNKNDKLSEKMRINVLNSKMLKLISHVKCHFISAKHNMGTSIIFKLINEAFFNSIKKIHTSKITEILKLAITKHQPPIYKRDRIKIKYAHIGKHNPLTIIIHGNKLEKLSNVYKKYLTNFFQSKLNLVGSSIVLYFKSSKNPFIK</sequence>
<evidence type="ECO:0000255" key="1">
    <source>
        <dbReference type="HAMAP-Rule" id="MF_00195"/>
    </source>
</evidence>
<name>DER_BUCBP</name>
<feature type="chain" id="PRO_0000178976" description="GTPase Der">
    <location>
        <begin position="1"/>
        <end position="462"/>
    </location>
</feature>
<feature type="domain" description="EngA-type G 1">
    <location>
        <begin position="3"/>
        <end position="170"/>
    </location>
</feature>
<feature type="domain" description="EngA-type G 2">
    <location>
        <begin position="201"/>
        <end position="372"/>
    </location>
</feature>
<feature type="domain" description="KH-like" evidence="1">
    <location>
        <begin position="373"/>
        <end position="457"/>
    </location>
</feature>
<feature type="binding site" evidence="1">
    <location>
        <begin position="9"/>
        <end position="16"/>
    </location>
    <ligand>
        <name>GTP</name>
        <dbReference type="ChEBI" id="CHEBI:37565"/>
        <label>1</label>
    </ligand>
</feature>
<feature type="binding site" evidence="1">
    <location>
        <begin position="57"/>
        <end position="61"/>
    </location>
    <ligand>
        <name>GTP</name>
        <dbReference type="ChEBI" id="CHEBI:37565"/>
        <label>1</label>
    </ligand>
</feature>
<feature type="binding site" evidence="1">
    <location>
        <begin position="122"/>
        <end position="125"/>
    </location>
    <ligand>
        <name>GTP</name>
        <dbReference type="ChEBI" id="CHEBI:37565"/>
        <label>1</label>
    </ligand>
</feature>
<feature type="binding site" evidence="1">
    <location>
        <begin position="207"/>
        <end position="214"/>
    </location>
    <ligand>
        <name>GTP</name>
        <dbReference type="ChEBI" id="CHEBI:37565"/>
        <label>2</label>
    </ligand>
</feature>
<feature type="binding site" evidence="1">
    <location>
        <begin position="254"/>
        <end position="258"/>
    </location>
    <ligand>
        <name>GTP</name>
        <dbReference type="ChEBI" id="CHEBI:37565"/>
        <label>2</label>
    </ligand>
</feature>
<feature type="binding site" evidence="1">
    <location>
        <begin position="319"/>
        <end position="322"/>
    </location>
    <ligand>
        <name>GTP</name>
        <dbReference type="ChEBI" id="CHEBI:37565"/>
        <label>2</label>
    </ligand>
</feature>
<reference key="1">
    <citation type="journal article" date="2003" name="Proc. Natl. Acad. Sci. U.S.A.">
        <title>Reductive genome evolution in Buchnera aphidicola.</title>
        <authorList>
            <person name="van Ham R.C.H.J."/>
            <person name="Kamerbeek J."/>
            <person name="Palacios C."/>
            <person name="Rausell C."/>
            <person name="Abascal F."/>
            <person name="Bastolla U."/>
            <person name="Fernandez J.M."/>
            <person name="Jimenez L."/>
            <person name="Postigo M."/>
            <person name="Silva F.J."/>
            <person name="Tamames J."/>
            <person name="Viguera E."/>
            <person name="Latorre A."/>
            <person name="Valencia A."/>
            <person name="Moran F."/>
            <person name="Moya A."/>
        </authorList>
    </citation>
    <scope>NUCLEOTIDE SEQUENCE [LARGE SCALE GENOMIC DNA]</scope>
    <source>
        <strain>Bp</strain>
    </source>
</reference>
<comment type="function">
    <text evidence="1">GTPase that plays an essential role in the late steps of ribosome biogenesis.</text>
</comment>
<comment type="subunit">
    <text evidence="1">Associates with the 50S ribosomal subunit.</text>
</comment>
<comment type="similarity">
    <text evidence="1">Belongs to the TRAFAC class TrmE-Era-EngA-EngB-Septin-like GTPase superfamily. EngA (Der) GTPase family.</text>
</comment>
<accession>Q89A14</accession>